<comment type="catalytic activity">
    <reaction evidence="1">
        <text>beta-D-fructose 1,6-bisphosphate + H2O = beta-D-fructose 6-phosphate + phosphate</text>
        <dbReference type="Rhea" id="RHEA:11064"/>
        <dbReference type="ChEBI" id="CHEBI:15377"/>
        <dbReference type="ChEBI" id="CHEBI:32966"/>
        <dbReference type="ChEBI" id="CHEBI:43474"/>
        <dbReference type="ChEBI" id="CHEBI:57634"/>
        <dbReference type="EC" id="3.1.3.11"/>
    </reaction>
</comment>
<comment type="cofactor">
    <cofactor evidence="1">
        <name>Mg(2+)</name>
        <dbReference type="ChEBI" id="CHEBI:18420"/>
    </cofactor>
    <text evidence="1">Binds 2 magnesium ions per subunit.</text>
</comment>
<comment type="pathway">
    <text evidence="1">Carbohydrate biosynthesis; gluconeogenesis.</text>
</comment>
<comment type="subunit">
    <text evidence="1">Homotetramer.</text>
</comment>
<comment type="subcellular location">
    <subcellularLocation>
        <location evidence="1">Cytoplasm</location>
    </subcellularLocation>
</comment>
<comment type="similarity">
    <text evidence="1">Belongs to the FBPase class 1 family.</text>
</comment>
<protein>
    <recommendedName>
        <fullName evidence="1">Fructose-1,6-bisphosphatase class 1</fullName>
        <shortName evidence="1">FBPase class 1</shortName>
        <ecNumber evidence="1">3.1.3.11</ecNumber>
    </recommendedName>
    <alternativeName>
        <fullName evidence="1">D-fructose-1,6-bisphosphate 1-phosphohydrolase class 1</fullName>
    </alternativeName>
</protein>
<evidence type="ECO:0000255" key="1">
    <source>
        <dbReference type="HAMAP-Rule" id="MF_01855"/>
    </source>
</evidence>
<organism>
    <name type="scientific">Neisseria meningitidis serogroup C / serotype 2a (strain ATCC 700532 / DSM 15464 / FAM18)</name>
    <dbReference type="NCBI Taxonomy" id="272831"/>
    <lineage>
        <taxon>Bacteria</taxon>
        <taxon>Pseudomonadati</taxon>
        <taxon>Pseudomonadota</taxon>
        <taxon>Betaproteobacteria</taxon>
        <taxon>Neisseriales</taxon>
        <taxon>Neisseriaceae</taxon>
        <taxon>Neisseria</taxon>
    </lineage>
</organism>
<proteinExistence type="inferred from homology"/>
<sequence>MDTLTRFLPEHLQQNQLPEALGGVLLSVVSACTEINAKVRLGALAGVLGMAGTGNIQGEDQKKLDVIANNIMIDTLKANPAVAGLASEEEDSFVSAGENGRYLVLFDPLDGSSNIDVNISVGTIFSILEKPEGALATESFLQTGRQQLAAGYVLYGPQTQLVFTFGHGVYMFTLNAENEFVLTKEKPKVPESTKEFAINMSNRRHWLPPVQQYIDELLAGETGTRGKNYNMRWVASMVAEIHRILMRGGVFMYPQDKRDPSKPGKLRLMYEANPMALILEQAGASASNARQDILGIRPESLHQRVAVIMGSSEEVDYLNRLHSK</sequence>
<feature type="chain" id="PRO_0000364610" description="Fructose-1,6-bisphosphatase class 1">
    <location>
        <begin position="1"/>
        <end position="324"/>
    </location>
</feature>
<feature type="binding site" evidence="1">
    <location>
        <position position="88"/>
    </location>
    <ligand>
        <name>Mg(2+)</name>
        <dbReference type="ChEBI" id="CHEBI:18420"/>
        <label>1</label>
    </ligand>
</feature>
<feature type="binding site" evidence="1">
    <location>
        <position position="107"/>
    </location>
    <ligand>
        <name>Mg(2+)</name>
        <dbReference type="ChEBI" id="CHEBI:18420"/>
        <label>1</label>
    </ligand>
</feature>
<feature type="binding site" evidence="1">
    <location>
        <position position="107"/>
    </location>
    <ligand>
        <name>Mg(2+)</name>
        <dbReference type="ChEBI" id="CHEBI:18420"/>
        <label>2</label>
    </ligand>
</feature>
<feature type="binding site" evidence="1">
    <location>
        <position position="109"/>
    </location>
    <ligand>
        <name>Mg(2+)</name>
        <dbReference type="ChEBI" id="CHEBI:18420"/>
        <label>1</label>
    </ligand>
</feature>
<feature type="binding site" evidence="1">
    <location>
        <begin position="110"/>
        <end position="113"/>
    </location>
    <ligand>
        <name>substrate</name>
    </ligand>
</feature>
<feature type="binding site" evidence="1">
    <location>
        <position position="110"/>
    </location>
    <ligand>
        <name>Mg(2+)</name>
        <dbReference type="ChEBI" id="CHEBI:18420"/>
        <label>2</label>
    </ligand>
</feature>
<feature type="binding site" evidence="1">
    <location>
        <position position="199"/>
    </location>
    <ligand>
        <name>substrate</name>
    </ligand>
</feature>
<feature type="binding site" evidence="1">
    <location>
        <position position="265"/>
    </location>
    <ligand>
        <name>substrate</name>
    </ligand>
</feature>
<feature type="binding site" evidence="1">
    <location>
        <position position="271"/>
    </location>
    <ligand>
        <name>Mg(2+)</name>
        <dbReference type="ChEBI" id="CHEBI:18420"/>
        <label>2</label>
    </ligand>
</feature>
<keyword id="KW-0119">Carbohydrate metabolism</keyword>
<keyword id="KW-0963">Cytoplasm</keyword>
<keyword id="KW-0378">Hydrolase</keyword>
<keyword id="KW-0460">Magnesium</keyword>
<keyword id="KW-0479">Metal-binding</keyword>
<gene>
    <name evidence="1" type="primary">fbp</name>
    <name type="ordered locus">NMC1022</name>
</gene>
<dbReference type="EC" id="3.1.3.11" evidence="1"/>
<dbReference type="EMBL" id="AM421808">
    <property type="protein sequence ID" value="CAM10286.1"/>
    <property type="molecule type" value="Genomic_DNA"/>
</dbReference>
<dbReference type="RefSeq" id="WP_002213657.1">
    <property type="nucleotide sequence ID" value="NC_008767.1"/>
</dbReference>
<dbReference type="SMR" id="A1KTU6"/>
<dbReference type="KEGG" id="nmc:NMC1022"/>
<dbReference type="HOGENOM" id="CLU_039977_0_0_4"/>
<dbReference type="UniPathway" id="UPA00138"/>
<dbReference type="Proteomes" id="UP000002286">
    <property type="component" value="Chromosome"/>
</dbReference>
<dbReference type="GO" id="GO:0005829">
    <property type="term" value="C:cytosol"/>
    <property type="evidence" value="ECO:0007669"/>
    <property type="project" value="TreeGrafter"/>
</dbReference>
<dbReference type="GO" id="GO:0042132">
    <property type="term" value="F:fructose 1,6-bisphosphate 1-phosphatase activity"/>
    <property type="evidence" value="ECO:0007669"/>
    <property type="project" value="UniProtKB-UniRule"/>
</dbReference>
<dbReference type="GO" id="GO:0000287">
    <property type="term" value="F:magnesium ion binding"/>
    <property type="evidence" value="ECO:0007669"/>
    <property type="project" value="UniProtKB-UniRule"/>
</dbReference>
<dbReference type="GO" id="GO:0030388">
    <property type="term" value="P:fructose 1,6-bisphosphate metabolic process"/>
    <property type="evidence" value="ECO:0007669"/>
    <property type="project" value="TreeGrafter"/>
</dbReference>
<dbReference type="GO" id="GO:0006002">
    <property type="term" value="P:fructose 6-phosphate metabolic process"/>
    <property type="evidence" value="ECO:0007669"/>
    <property type="project" value="TreeGrafter"/>
</dbReference>
<dbReference type="GO" id="GO:0006000">
    <property type="term" value="P:fructose metabolic process"/>
    <property type="evidence" value="ECO:0007669"/>
    <property type="project" value="TreeGrafter"/>
</dbReference>
<dbReference type="GO" id="GO:0006094">
    <property type="term" value="P:gluconeogenesis"/>
    <property type="evidence" value="ECO:0007669"/>
    <property type="project" value="UniProtKB-UniRule"/>
</dbReference>
<dbReference type="GO" id="GO:0005986">
    <property type="term" value="P:sucrose biosynthetic process"/>
    <property type="evidence" value="ECO:0007669"/>
    <property type="project" value="TreeGrafter"/>
</dbReference>
<dbReference type="CDD" id="cd00354">
    <property type="entry name" value="FBPase"/>
    <property type="match status" value="1"/>
</dbReference>
<dbReference type="FunFam" id="3.30.540.10:FF:000006">
    <property type="entry name" value="Fructose-1,6-bisphosphatase class 1"/>
    <property type="match status" value="1"/>
</dbReference>
<dbReference type="FunFam" id="3.40.190.80:FF:000011">
    <property type="entry name" value="Fructose-1,6-bisphosphatase class 1"/>
    <property type="match status" value="1"/>
</dbReference>
<dbReference type="Gene3D" id="3.40.190.80">
    <property type="match status" value="1"/>
</dbReference>
<dbReference type="Gene3D" id="3.30.540.10">
    <property type="entry name" value="Fructose-1,6-Bisphosphatase, subunit A, domain 1"/>
    <property type="match status" value="1"/>
</dbReference>
<dbReference type="HAMAP" id="MF_01855">
    <property type="entry name" value="FBPase_class1"/>
    <property type="match status" value="1"/>
</dbReference>
<dbReference type="InterPro" id="IPR044015">
    <property type="entry name" value="FBPase_C_dom"/>
</dbReference>
<dbReference type="InterPro" id="IPR000146">
    <property type="entry name" value="FBPase_class-1"/>
</dbReference>
<dbReference type="InterPro" id="IPR033391">
    <property type="entry name" value="FBPase_N"/>
</dbReference>
<dbReference type="InterPro" id="IPR028343">
    <property type="entry name" value="FBPtase"/>
</dbReference>
<dbReference type="NCBIfam" id="NF006779">
    <property type="entry name" value="PRK09293.1-3"/>
    <property type="match status" value="1"/>
</dbReference>
<dbReference type="NCBIfam" id="NF006780">
    <property type="entry name" value="PRK09293.1-4"/>
    <property type="match status" value="1"/>
</dbReference>
<dbReference type="PANTHER" id="PTHR11556">
    <property type="entry name" value="FRUCTOSE-1,6-BISPHOSPHATASE-RELATED"/>
    <property type="match status" value="1"/>
</dbReference>
<dbReference type="PANTHER" id="PTHR11556:SF35">
    <property type="entry name" value="SEDOHEPTULOSE-1,7-BISPHOSPHATASE, CHLOROPLASTIC"/>
    <property type="match status" value="1"/>
</dbReference>
<dbReference type="Pfam" id="PF00316">
    <property type="entry name" value="FBPase"/>
    <property type="match status" value="1"/>
</dbReference>
<dbReference type="Pfam" id="PF18913">
    <property type="entry name" value="FBPase_C"/>
    <property type="match status" value="1"/>
</dbReference>
<dbReference type="PIRSF" id="PIRSF500210">
    <property type="entry name" value="FBPtase"/>
    <property type="match status" value="1"/>
</dbReference>
<dbReference type="PIRSF" id="PIRSF000904">
    <property type="entry name" value="FBPtase_SBPase"/>
    <property type="match status" value="1"/>
</dbReference>
<dbReference type="PRINTS" id="PR00115">
    <property type="entry name" value="F16BPHPHTASE"/>
</dbReference>
<dbReference type="SUPFAM" id="SSF56655">
    <property type="entry name" value="Carbohydrate phosphatase"/>
    <property type="match status" value="1"/>
</dbReference>
<reference key="1">
    <citation type="journal article" date="2007" name="PLoS Genet.">
        <title>Meningococcal genetic variation mechanisms viewed through comparative analysis of serogroup C strain FAM18.</title>
        <authorList>
            <person name="Bentley S.D."/>
            <person name="Vernikos G.S."/>
            <person name="Snyder L.A.S."/>
            <person name="Churcher C."/>
            <person name="Arrowsmith C."/>
            <person name="Chillingworth T."/>
            <person name="Cronin A."/>
            <person name="Davis P.H."/>
            <person name="Holroyd N.E."/>
            <person name="Jagels K."/>
            <person name="Maddison M."/>
            <person name="Moule S."/>
            <person name="Rabbinowitsch E."/>
            <person name="Sharp S."/>
            <person name="Unwin L."/>
            <person name="Whitehead S."/>
            <person name="Quail M.A."/>
            <person name="Achtman M."/>
            <person name="Barrell B.G."/>
            <person name="Saunders N.J."/>
            <person name="Parkhill J."/>
        </authorList>
    </citation>
    <scope>NUCLEOTIDE SEQUENCE [LARGE SCALE GENOMIC DNA]</scope>
    <source>
        <strain>ATCC 700532 / DSM 15464 / FAM18</strain>
    </source>
</reference>
<name>F16PA_NEIMF</name>
<accession>A1KTU6</accession>